<keyword id="KW-0049">Antioxidant</keyword>
<keyword id="KW-0963">Cytoplasm</keyword>
<keyword id="KW-1015">Disulfide bond</keyword>
<keyword id="KW-0560">Oxidoreductase</keyword>
<keyword id="KW-0575">Peroxidase</keyword>
<keyword id="KW-0676">Redox-active center</keyword>
<keyword id="KW-1185">Reference proteome</keyword>
<reference key="1">
    <citation type="journal article" date="2004" name="J. Bacteriol.">
        <title>Complete genome sequence of the genetically tractable hydrogenotrophic methanogen Methanococcus maripaludis.</title>
        <authorList>
            <person name="Hendrickson E.L."/>
            <person name="Kaul R."/>
            <person name="Zhou Y."/>
            <person name="Bovee D."/>
            <person name="Chapman P."/>
            <person name="Chung J."/>
            <person name="Conway de Macario E."/>
            <person name="Dodsworth J.A."/>
            <person name="Gillett W."/>
            <person name="Graham D.E."/>
            <person name="Hackett M."/>
            <person name="Haydock A.K."/>
            <person name="Kang A."/>
            <person name="Land M.L."/>
            <person name="Levy R."/>
            <person name="Lie T.J."/>
            <person name="Major T.A."/>
            <person name="Moore B.C."/>
            <person name="Porat I."/>
            <person name="Palmeiri A."/>
            <person name="Rouse G."/>
            <person name="Saenphimmachak C."/>
            <person name="Soell D."/>
            <person name="Van Dien S."/>
            <person name="Wang T."/>
            <person name="Whitman W.B."/>
            <person name="Xia Q."/>
            <person name="Zhang Y."/>
            <person name="Larimer F.W."/>
            <person name="Olson M.V."/>
            <person name="Leigh J.A."/>
        </authorList>
    </citation>
    <scope>NUCLEOTIDE SEQUENCE [LARGE SCALE GENOMIC DNA]</scope>
    <source>
        <strain>DSM 14266 / JCM 13030 / NBRC 101832 / S2 / LL</strain>
    </source>
</reference>
<accession>Q6LY19</accession>
<feature type="chain" id="PRO_0000135157" description="Peroxiredoxin">
    <location>
        <begin position="1"/>
        <end position="217"/>
    </location>
</feature>
<feature type="domain" description="Thioredoxin" evidence="1">
    <location>
        <begin position="2"/>
        <end position="159"/>
    </location>
</feature>
<feature type="active site" description="Cysteine sulfenic acid (-SOH) intermediate" evidence="1">
    <location>
        <position position="46"/>
    </location>
</feature>
<feature type="binding site" evidence="1">
    <location>
        <position position="122"/>
    </location>
    <ligand>
        <name>substrate</name>
    </ligand>
</feature>
<feature type="disulfide bond" description="Interchain (with C-211); in linked form" evidence="1">
    <location>
        <position position="46"/>
    </location>
</feature>
<feature type="disulfide bond" description="Interchain (with C-46); in linked form" evidence="1">
    <location>
        <position position="211"/>
    </location>
</feature>
<gene>
    <name type="ordered locus">MMP1174</name>
</gene>
<proteinExistence type="inferred from homology"/>
<comment type="function">
    <text evidence="1">Thiol-specific peroxidase that catalyzes the reduction of hydrogen peroxide and organic hydroperoxides to water and alcohols, respectively. Plays a role in cell protection against oxidative stress by detoxifying peroxides.</text>
</comment>
<comment type="catalytic activity">
    <reaction evidence="1">
        <text>a hydroperoxide + [thioredoxin]-dithiol = an alcohol + [thioredoxin]-disulfide + H2O</text>
        <dbReference type="Rhea" id="RHEA:62620"/>
        <dbReference type="Rhea" id="RHEA-COMP:10698"/>
        <dbReference type="Rhea" id="RHEA-COMP:10700"/>
        <dbReference type="ChEBI" id="CHEBI:15377"/>
        <dbReference type="ChEBI" id="CHEBI:29950"/>
        <dbReference type="ChEBI" id="CHEBI:30879"/>
        <dbReference type="ChEBI" id="CHEBI:35924"/>
        <dbReference type="ChEBI" id="CHEBI:50058"/>
        <dbReference type="EC" id="1.11.1.24"/>
    </reaction>
</comment>
<comment type="subunit">
    <text evidence="1">Homodecamer. Pentamer of dimers that assemble into a ring structure.</text>
</comment>
<comment type="subcellular location">
    <subcellularLocation>
        <location evidence="1">Cytoplasm</location>
    </subcellularLocation>
</comment>
<comment type="miscellaneous">
    <text evidence="1">The active site is a conserved redox-active cysteine residue, the peroxidatic cysteine (C(P)), which makes the nucleophilic attack on the peroxide substrate. The peroxide oxidizes the C(P)-SH to cysteine sulfenic acid (C(P)-SOH), which then reacts with another cysteine residue, the resolving cysteine (C(R)), to form a disulfide bridge. The disulfide is subsequently reduced by an appropriate electron donor to complete the catalytic cycle. Although the primary sequence of this enzyme is similar to those of the 1-Cys Prx6 enzymes, its catalytic properties resemble those of the typical 2-Cys Prxs and C(R) is provided by the other dimeric subunit to form an intersubunit disulfide. The disulfide is subsequently reduced by thioredoxin.</text>
</comment>
<comment type="similarity">
    <text evidence="1">Belongs to the peroxiredoxin family. Prx6 subfamily.</text>
</comment>
<protein>
    <recommendedName>
        <fullName evidence="1">Peroxiredoxin</fullName>
        <ecNumber evidence="1">1.11.1.24</ecNumber>
    </recommendedName>
    <alternativeName>
        <fullName evidence="1">Thioredoxin peroxidase</fullName>
    </alternativeName>
    <alternativeName>
        <fullName evidence="1">Thioredoxin-dependent peroxiredoxin</fullName>
    </alternativeName>
</protein>
<sequence>MVVIGEKFPEVEVTTTHGKLKLPEHYIESGKWFVLFSHPGDFTPVCTTEFVAFQKRYDQFRELNTELIGLSIDQVFSHIKWVEWIKEKLDVDIEFPIIADDRGELAVKLGMISPYKGNNTVRAVFVVDATGTIRAIIYYPQEVGRNMDEIVRLVKALQTADKGYATPANWPNNDFLNEKVIVPPANNMDARKKRLEACKSGELEGYDWWFCYTDLKE</sequence>
<evidence type="ECO:0000255" key="1">
    <source>
        <dbReference type="HAMAP-Rule" id="MF_00401"/>
    </source>
</evidence>
<dbReference type="EC" id="1.11.1.24" evidence="1"/>
<dbReference type="EMBL" id="BX950229">
    <property type="protein sequence ID" value="CAF30730.1"/>
    <property type="molecule type" value="Genomic_DNA"/>
</dbReference>
<dbReference type="RefSeq" id="WP_011171118.1">
    <property type="nucleotide sequence ID" value="NC_005791.1"/>
</dbReference>
<dbReference type="SMR" id="Q6LY19"/>
<dbReference type="STRING" id="267377.MMP1174"/>
<dbReference type="EnsemblBacteria" id="CAF30730">
    <property type="protein sequence ID" value="CAF30730"/>
    <property type="gene ID" value="MMP1174"/>
</dbReference>
<dbReference type="GeneID" id="2762241"/>
<dbReference type="KEGG" id="mmp:MMP1174"/>
<dbReference type="PATRIC" id="fig|267377.15.peg.1207"/>
<dbReference type="eggNOG" id="arCOG00312">
    <property type="taxonomic scope" value="Archaea"/>
</dbReference>
<dbReference type="HOGENOM" id="CLU_042529_4_4_2"/>
<dbReference type="OrthoDB" id="6924at2157"/>
<dbReference type="Proteomes" id="UP000000590">
    <property type="component" value="Chromosome"/>
</dbReference>
<dbReference type="GO" id="GO:0005829">
    <property type="term" value="C:cytosol"/>
    <property type="evidence" value="ECO:0007669"/>
    <property type="project" value="TreeGrafter"/>
</dbReference>
<dbReference type="GO" id="GO:0008379">
    <property type="term" value="F:thioredoxin peroxidase activity"/>
    <property type="evidence" value="ECO:0007669"/>
    <property type="project" value="TreeGrafter"/>
</dbReference>
<dbReference type="GO" id="GO:0045454">
    <property type="term" value="P:cell redox homeostasis"/>
    <property type="evidence" value="ECO:0007669"/>
    <property type="project" value="TreeGrafter"/>
</dbReference>
<dbReference type="GO" id="GO:0033554">
    <property type="term" value="P:cellular response to stress"/>
    <property type="evidence" value="ECO:0007669"/>
    <property type="project" value="TreeGrafter"/>
</dbReference>
<dbReference type="GO" id="GO:0042744">
    <property type="term" value="P:hydrogen peroxide catabolic process"/>
    <property type="evidence" value="ECO:0007669"/>
    <property type="project" value="TreeGrafter"/>
</dbReference>
<dbReference type="GO" id="GO:0006979">
    <property type="term" value="P:response to oxidative stress"/>
    <property type="evidence" value="ECO:0007669"/>
    <property type="project" value="TreeGrafter"/>
</dbReference>
<dbReference type="CDD" id="cd03016">
    <property type="entry name" value="PRX_1cys"/>
    <property type="match status" value="1"/>
</dbReference>
<dbReference type="FunFam" id="3.30.1020.10:FF:000002">
    <property type="entry name" value="Peroxiredoxin"/>
    <property type="match status" value="1"/>
</dbReference>
<dbReference type="FunFam" id="3.40.30.10:FF:000011">
    <property type="entry name" value="Peroxiredoxin PRX1"/>
    <property type="match status" value="1"/>
</dbReference>
<dbReference type="Gene3D" id="3.30.1020.10">
    <property type="entry name" value="Antioxidant, Horf6, Chain A, domain2"/>
    <property type="match status" value="1"/>
</dbReference>
<dbReference type="Gene3D" id="3.40.30.10">
    <property type="entry name" value="Glutaredoxin"/>
    <property type="match status" value="1"/>
</dbReference>
<dbReference type="HAMAP" id="MF_00401">
    <property type="entry name" value="Peroxiredoxin"/>
    <property type="match status" value="1"/>
</dbReference>
<dbReference type="InterPro" id="IPR000866">
    <property type="entry name" value="AhpC/TSA"/>
</dbReference>
<dbReference type="InterPro" id="IPR050217">
    <property type="entry name" value="Peroxiredoxin"/>
</dbReference>
<dbReference type="InterPro" id="IPR024706">
    <property type="entry name" value="Peroxiredoxin_AhpC-typ"/>
</dbReference>
<dbReference type="InterPro" id="IPR019479">
    <property type="entry name" value="Peroxiredoxin_C"/>
</dbReference>
<dbReference type="InterPro" id="IPR022915">
    <property type="entry name" value="Peroxiredoxin_TDXH"/>
</dbReference>
<dbReference type="InterPro" id="IPR045020">
    <property type="entry name" value="PRX_1cys"/>
</dbReference>
<dbReference type="InterPro" id="IPR036249">
    <property type="entry name" value="Thioredoxin-like_sf"/>
</dbReference>
<dbReference type="InterPro" id="IPR013766">
    <property type="entry name" value="Thioredoxin_domain"/>
</dbReference>
<dbReference type="NCBIfam" id="NF009668">
    <property type="entry name" value="PRK13189.1"/>
    <property type="match status" value="1"/>
</dbReference>
<dbReference type="PANTHER" id="PTHR10681:SF121">
    <property type="entry name" value="ALKYL HYDROPEROXIDE REDUCTASE C"/>
    <property type="match status" value="1"/>
</dbReference>
<dbReference type="PANTHER" id="PTHR10681">
    <property type="entry name" value="THIOREDOXIN PEROXIDASE"/>
    <property type="match status" value="1"/>
</dbReference>
<dbReference type="Pfam" id="PF10417">
    <property type="entry name" value="1-cysPrx_C"/>
    <property type="match status" value="1"/>
</dbReference>
<dbReference type="Pfam" id="PF00578">
    <property type="entry name" value="AhpC-TSA"/>
    <property type="match status" value="1"/>
</dbReference>
<dbReference type="PIRSF" id="PIRSF000239">
    <property type="entry name" value="AHPC"/>
    <property type="match status" value="1"/>
</dbReference>
<dbReference type="SUPFAM" id="SSF52833">
    <property type="entry name" value="Thioredoxin-like"/>
    <property type="match status" value="1"/>
</dbReference>
<dbReference type="PROSITE" id="PS51352">
    <property type="entry name" value="THIOREDOXIN_2"/>
    <property type="match status" value="1"/>
</dbReference>
<name>TDXH_METMP</name>
<organism>
    <name type="scientific">Methanococcus maripaludis (strain DSM 14266 / JCM 13030 / NBRC 101832 / S2 / LL)</name>
    <dbReference type="NCBI Taxonomy" id="267377"/>
    <lineage>
        <taxon>Archaea</taxon>
        <taxon>Methanobacteriati</taxon>
        <taxon>Methanobacteriota</taxon>
        <taxon>Methanomada group</taxon>
        <taxon>Methanococci</taxon>
        <taxon>Methanococcales</taxon>
        <taxon>Methanococcaceae</taxon>
        <taxon>Methanococcus</taxon>
    </lineage>
</organism>